<protein>
    <recommendedName>
        <fullName evidence="1">Large ribosomal subunit protein bL17</fullName>
    </recommendedName>
    <alternativeName>
        <fullName evidence="2">50S ribosomal protein L17</fullName>
    </alternativeName>
</protein>
<organism>
    <name type="scientific">Caldanaerobacter subterraneus subsp. tengcongensis (strain DSM 15242 / JCM 11007 / NBRC 100824 / MB4)</name>
    <name type="common">Thermoanaerobacter tengcongensis</name>
    <dbReference type="NCBI Taxonomy" id="273068"/>
    <lineage>
        <taxon>Bacteria</taxon>
        <taxon>Bacillati</taxon>
        <taxon>Bacillota</taxon>
        <taxon>Clostridia</taxon>
        <taxon>Thermoanaerobacterales</taxon>
        <taxon>Thermoanaerobacteraceae</taxon>
        <taxon>Caldanaerobacter</taxon>
    </lineage>
</organism>
<dbReference type="EMBL" id="AE008691">
    <property type="protein sequence ID" value="AAM25406.1"/>
    <property type="molecule type" value="Genomic_DNA"/>
</dbReference>
<dbReference type="RefSeq" id="WP_011026309.1">
    <property type="nucleotide sequence ID" value="NZ_JANUCV010000001.1"/>
</dbReference>
<dbReference type="SMR" id="Q8R7Y3"/>
<dbReference type="STRING" id="273068.TTE2262"/>
<dbReference type="KEGG" id="tte:TTE2262"/>
<dbReference type="eggNOG" id="COG0203">
    <property type="taxonomic scope" value="Bacteria"/>
</dbReference>
<dbReference type="HOGENOM" id="CLU_074407_2_2_9"/>
<dbReference type="OrthoDB" id="9809073at2"/>
<dbReference type="Proteomes" id="UP000000555">
    <property type="component" value="Chromosome"/>
</dbReference>
<dbReference type="GO" id="GO:0022625">
    <property type="term" value="C:cytosolic large ribosomal subunit"/>
    <property type="evidence" value="ECO:0007669"/>
    <property type="project" value="TreeGrafter"/>
</dbReference>
<dbReference type="GO" id="GO:0003735">
    <property type="term" value="F:structural constituent of ribosome"/>
    <property type="evidence" value="ECO:0007669"/>
    <property type="project" value="InterPro"/>
</dbReference>
<dbReference type="GO" id="GO:0006412">
    <property type="term" value="P:translation"/>
    <property type="evidence" value="ECO:0007669"/>
    <property type="project" value="UniProtKB-UniRule"/>
</dbReference>
<dbReference type="FunFam" id="3.90.1030.10:FF:000002">
    <property type="entry name" value="50S ribosomal protein L17"/>
    <property type="match status" value="1"/>
</dbReference>
<dbReference type="Gene3D" id="3.90.1030.10">
    <property type="entry name" value="Ribosomal protein L17"/>
    <property type="match status" value="1"/>
</dbReference>
<dbReference type="HAMAP" id="MF_01368">
    <property type="entry name" value="Ribosomal_bL17"/>
    <property type="match status" value="1"/>
</dbReference>
<dbReference type="InterPro" id="IPR000456">
    <property type="entry name" value="Ribosomal_bL17"/>
</dbReference>
<dbReference type="InterPro" id="IPR047859">
    <property type="entry name" value="Ribosomal_bL17_CS"/>
</dbReference>
<dbReference type="InterPro" id="IPR036373">
    <property type="entry name" value="Ribosomal_bL17_sf"/>
</dbReference>
<dbReference type="NCBIfam" id="TIGR00059">
    <property type="entry name" value="L17"/>
    <property type="match status" value="1"/>
</dbReference>
<dbReference type="PANTHER" id="PTHR14413:SF16">
    <property type="entry name" value="LARGE RIBOSOMAL SUBUNIT PROTEIN BL17M"/>
    <property type="match status" value="1"/>
</dbReference>
<dbReference type="PANTHER" id="PTHR14413">
    <property type="entry name" value="RIBOSOMAL PROTEIN L17"/>
    <property type="match status" value="1"/>
</dbReference>
<dbReference type="Pfam" id="PF01196">
    <property type="entry name" value="Ribosomal_L17"/>
    <property type="match status" value="1"/>
</dbReference>
<dbReference type="SUPFAM" id="SSF64263">
    <property type="entry name" value="Prokaryotic ribosomal protein L17"/>
    <property type="match status" value="1"/>
</dbReference>
<dbReference type="PROSITE" id="PS01167">
    <property type="entry name" value="RIBOSOMAL_L17"/>
    <property type="match status" value="1"/>
</dbReference>
<sequence>MSYRKLGRPSDQRRAMLRNLVTDFLRYERITTTEARAKEVRKIAEKMITLGKRGDLHARRQALAYILDESVVKKLFDDIAPRYKERNGGYTRIFKLGPRRGDGAPLAVIELV</sequence>
<evidence type="ECO:0000255" key="1">
    <source>
        <dbReference type="HAMAP-Rule" id="MF_01368"/>
    </source>
</evidence>
<evidence type="ECO:0000305" key="2"/>
<reference key="1">
    <citation type="journal article" date="2002" name="Genome Res.">
        <title>A complete sequence of the T. tengcongensis genome.</title>
        <authorList>
            <person name="Bao Q."/>
            <person name="Tian Y."/>
            <person name="Li W."/>
            <person name="Xu Z."/>
            <person name="Xuan Z."/>
            <person name="Hu S."/>
            <person name="Dong W."/>
            <person name="Yang J."/>
            <person name="Chen Y."/>
            <person name="Xue Y."/>
            <person name="Xu Y."/>
            <person name="Lai X."/>
            <person name="Huang L."/>
            <person name="Dong X."/>
            <person name="Ma Y."/>
            <person name="Ling L."/>
            <person name="Tan H."/>
            <person name="Chen R."/>
            <person name="Wang J."/>
            <person name="Yu J."/>
            <person name="Yang H."/>
        </authorList>
    </citation>
    <scope>NUCLEOTIDE SEQUENCE [LARGE SCALE GENOMIC DNA]</scope>
    <source>
        <strain>DSM 15242 / JCM 11007 / NBRC 100824 / MB4</strain>
    </source>
</reference>
<feature type="chain" id="PRO_0000267957" description="Large ribosomal subunit protein bL17">
    <location>
        <begin position="1"/>
        <end position="112"/>
    </location>
</feature>
<name>RL17_CALS4</name>
<keyword id="KW-1185">Reference proteome</keyword>
<keyword id="KW-0687">Ribonucleoprotein</keyword>
<keyword id="KW-0689">Ribosomal protein</keyword>
<gene>
    <name evidence="1" type="primary">rplQ</name>
    <name type="ordered locus">TTE2262</name>
</gene>
<comment type="subunit">
    <text evidence="1">Part of the 50S ribosomal subunit. Contacts protein L32.</text>
</comment>
<comment type="similarity">
    <text evidence="1">Belongs to the bacterial ribosomal protein bL17 family.</text>
</comment>
<accession>Q8R7Y3</accession>
<proteinExistence type="inferred from homology"/>